<accession>A9KN28</accession>
<proteinExistence type="inferred from homology"/>
<feature type="chain" id="PRO_0000344563" description="L-rhamnose mutarotase">
    <location>
        <begin position="1"/>
        <end position="104"/>
    </location>
</feature>
<feature type="active site" description="Proton donor" evidence="1">
    <location>
        <position position="22"/>
    </location>
</feature>
<feature type="binding site" evidence="1">
    <location>
        <position position="18"/>
    </location>
    <ligand>
        <name>substrate</name>
    </ligand>
</feature>
<feature type="binding site" evidence="1">
    <location>
        <position position="41"/>
    </location>
    <ligand>
        <name>substrate</name>
    </ligand>
</feature>
<feature type="binding site" evidence="1">
    <location>
        <begin position="76"/>
        <end position="77"/>
    </location>
    <ligand>
        <name>substrate</name>
    </ligand>
</feature>
<name>RHAM_LACP7</name>
<protein>
    <recommendedName>
        <fullName evidence="1">L-rhamnose mutarotase</fullName>
        <ecNumber evidence="1">5.1.3.32</ecNumber>
    </recommendedName>
    <alternativeName>
        <fullName evidence="1">Rhamnose 1-epimerase</fullName>
    </alternativeName>
    <alternativeName>
        <fullName evidence="1">Type-3 mutarotase</fullName>
    </alternativeName>
</protein>
<comment type="function">
    <text evidence="1">Involved in the anomeric conversion of L-rhamnose.</text>
</comment>
<comment type="catalytic activity">
    <reaction evidence="1">
        <text>alpha-L-rhamnose = beta-L-rhamnose</text>
        <dbReference type="Rhea" id="RHEA:25584"/>
        <dbReference type="ChEBI" id="CHEBI:27586"/>
        <dbReference type="ChEBI" id="CHEBI:27907"/>
        <dbReference type="EC" id="5.1.3.32"/>
    </reaction>
</comment>
<comment type="pathway">
    <text evidence="1">Carbohydrate metabolism; L-rhamnose metabolism.</text>
</comment>
<comment type="subunit">
    <text evidence="1">Homodimer.</text>
</comment>
<comment type="subcellular location">
    <subcellularLocation>
        <location evidence="1">Cytoplasm</location>
    </subcellularLocation>
</comment>
<comment type="similarity">
    <text evidence="1">Belongs to the rhamnose mutarotase family.</text>
</comment>
<reference key="1">
    <citation type="submission" date="2007-11" db="EMBL/GenBank/DDBJ databases">
        <title>Complete genome sequence of Clostridium phytofermentans ISDg.</title>
        <authorList>
            <person name="Leschine S.B."/>
            <person name="Warnick T.A."/>
            <person name="Blanchard J.L."/>
            <person name="Schnell D.J."/>
            <person name="Petit E.L."/>
            <person name="LaTouf W.G."/>
            <person name="Copeland A."/>
            <person name="Lucas S."/>
            <person name="Lapidus A."/>
            <person name="Barry K."/>
            <person name="Glavina del Rio T."/>
            <person name="Dalin E."/>
            <person name="Tice H."/>
            <person name="Pitluck S."/>
            <person name="Kiss H."/>
            <person name="Brettin T."/>
            <person name="Bruce D."/>
            <person name="Detter J.C."/>
            <person name="Han C."/>
            <person name="Kuske C."/>
            <person name="Schmutz J."/>
            <person name="Larimer F."/>
            <person name="Land M."/>
            <person name="Hauser L."/>
            <person name="Kyrpides N."/>
            <person name="Kim E.A."/>
            <person name="Richardson P."/>
        </authorList>
    </citation>
    <scope>NUCLEOTIDE SEQUENCE [LARGE SCALE GENOMIC DNA]</scope>
    <source>
        <strain>ATCC 700394 / DSM 18823 / ISDg</strain>
    </source>
</reference>
<gene>
    <name evidence="1" type="primary">rhaM</name>
    <name type="ordered locus">Cphy_1149</name>
</gene>
<keyword id="KW-0119">Carbohydrate metabolism</keyword>
<keyword id="KW-0963">Cytoplasm</keyword>
<keyword id="KW-0413">Isomerase</keyword>
<keyword id="KW-1185">Reference proteome</keyword>
<keyword id="KW-0684">Rhamnose metabolism</keyword>
<sequence length="104" mass="12490">MVRKAFKMQLFEGQAKEYEKRHNELWPEMKEMIHEYGGSNYTIFLDEETNVLYGYIELEDEEKWDKTAETEICKKWWAFMADIMETNPDNSPVSVSLKNVFHLD</sequence>
<organism>
    <name type="scientific">Lachnoclostridium phytofermentans (strain ATCC 700394 / DSM 18823 / ISDg)</name>
    <name type="common">Clostridium phytofermentans</name>
    <dbReference type="NCBI Taxonomy" id="357809"/>
    <lineage>
        <taxon>Bacteria</taxon>
        <taxon>Bacillati</taxon>
        <taxon>Bacillota</taxon>
        <taxon>Clostridia</taxon>
        <taxon>Lachnospirales</taxon>
        <taxon>Lachnospiraceae</taxon>
    </lineage>
</organism>
<evidence type="ECO:0000255" key="1">
    <source>
        <dbReference type="HAMAP-Rule" id="MF_01663"/>
    </source>
</evidence>
<dbReference type="EC" id="5.1.3.32" evidence="1"/>
<dbReference type="EMBL" id="CP000885">
    <property type="protein sequence ID" value="ABX41527.1"/>
    <property type="molecule type" value="Genomic_DNA"/>
</dbReference>
<dbReference type="RefSeq" id="WP_012199175.1">
    <property type="nucleotide sequence ID" value="NC_010001.1"/>
</dbReference>
<dbReference type="SMR" id="A9KN28"/>
<dbReference type="STRING" id="357809.Cphy_1149"/>
<dbReference type="KEGG" id="cpy:Cphy_1149"/>
<dbReference type="eggNOG" id="COG3254">
    <property type="taxonomic scope" value="Bacteria"/>
</dbReference>
<dbReference type="HOGENOM" id="CLU_100689_2_0_9"/>
<dbReference type="OrthoDB" id="9799608at2"/>
<dbReference type="UniPathway" id="UPA00125"/>
<dbReference type="Proteomes" id="UP000000370">
    <property type="component" value="Chromosome"/>
</dbReference>
<dbReference type="GO" id="GO:0005737">
    <property type="term" value="C:cytoplasm"/>
    <property type="evidence" value="ECO:0007669"/>
    <property type="project" value="UniProtKB-SubCell"/>
</dbReference>
<dbReference type="GO" id="GO:0062192">
    <property type="term" value="F:L-rhamnose mutarotase activity"/>
    <property type="evidence" value="ECO:0007669"/>
    <property type="project" value="UniProtKB-EC"/>
</dbReference>
<dbReference type="GO" id="GO:0019301">
    <property type="term" value="P:rhamnose catabolic process"/>
    <property type="evidence" value="ECO:0007669"/>
    <property type="project" value="TreeGrafter"/>
</dbReference>
<dbReference type="Gene3D" id="3.30.70.100">
    <property type="match status" value="1"/>
</dbReference>
<dbReference type="HAMAP" id="MF_01663">
    <property type="entry name" value="L_rham_rotase"/>
    <property type="match status" value="1"/>
</dbReference>
<dbReference type="InterPro" id="IPR011008">
    <property type="entry name" value="Dimeric_a/b-barrel"/>
</dbReference>
<dbReference type="InterPro" id="IPR013448">
    <property type="entry name" value="L-rhamnose_mutarotase"/>
</dbReference>
<dbReference type="InterPro" id="IPR008000">
    <property type="entry name" value="Rham/fucose_mutarotase"/>
</dbReference>
<dbReference type="NCBIfam" id="TIGR02625">
    <property type="entry name" value="YiiL_rotase"/>
    <property type="match status" value="1"/>
</dbReference>
<dbReference type="PANTHER" id="PTHR34389">
    <property type="entry name" value="L-RHAMNOSE MUTAROTASE"/>
    <property type="match status" value="1"/>
</dbReference>
<dbReference type="PANTHER" id="PTHR34389:SF2">
    <property type="entry name" value="L-RHAMNOSE MUTAROTASE"/>
    <property type="match status" value="1"/>
</dbReference>
<dbReference type="Pfam" id="PF05336">
    <property type="entry name" value="rhaM"/>
    <property type="match status" value="1"/>
</dbReference>
<dbReference type="SUPFAM" id="SSF54909">
    <property type="entry name" value="Dimeric alpha+beta barrel"/>
    <property type="match status" value="1"/>
</dbReference>